<sequence>MKLTSREMEKLMIVVAADLARRRKERGLKLNYPEAVAMITYEVLEGARDGKTVAQLMQYGATILTKEDVMEGVAEMIPDIQIEATFPDGTKLVTVHDPIR</sequence>
<name>URE3_BACSB</name>
<feature type="chain" id="PRO_0000097992" description="Urease subunit gamma">
    <location>
        <begin position="1"/>
        <end position="100"/>
    </location>
</feature>
<proteinExistence type="evidence at protein level"/>
<evidence type="ECO:0000255" key="1">
    <source>
        <dbReference type="HAMAP-Rule" id="MF_00739"/>
    </source>
</evidence>
<dbReference type="EC" id="3.5.1.5" evidence="1"/>
<dbReference type="EMBL" id="D14439">
    <property type="protein sequence ID" value="BAA03323.1"/>
    <property type="molecule type" value="Genomic_DNA"/>
</dbReference>
<dbReference type="PIR" id="A36950">
    <property type="entry name" value="A36950"/>
</dbReference>
<dbReference type="SMR" id="Q07399"/>
<dbReference type="UniPathway" id="UPA00258">
    <property type="reaction ID" value="UER00370"/>
</dbReference>
<dbReference type="GO" id="GO:0005737">
    <property type="term" value="C:cytoplasm"/>
    <property type="evidence" value="ECO:0007669"/>
    <property type="project" value="UniProtKB-SubCell"/>
</dbReference>
<dbReference type="GO" id="GO:0016151">
    <property type="term" value="F:nickel cation binding"/>
    <property type="evidence" value="ECO:0007669"/>
    <property type="project" value="InterPro"/>
</dbReference>
<dbReference type="GO" id="GO:0009039">
    <property type="term" value="F:urease activity"/>
    <property type="evidence" value="ECO:0007669"/>
    <property type="project" value="UniProtKB-UniRule"/>
</dbReference>
<dbReference type="GO" id="GO:0043419">
    <property type="term" value="P:urea catabolic process"/>
    <property type="evidence" value="ECO:0007669"/>
    <property type="project" value="UniProtKB-UniRule"/>
</dbReference>
<dbReference type="CDD" id="cd00390">
    <property type="entry name" value="Urease_gamma"/>
    <property type="match status" value="1"/>
</dbReference>
<dbReference type="Gene3D" id="3.30.280.10">
    <property type="entry name" value="Urease, gamma-like subunit"/>
    <property type="match status" value="1"/>
</dbReference>
<dbReference type="HAMAP" id="MF_00739">
    <property type="entry name" value="Urease_gamma"/>
    <property type="match status" value="1"/>
</dbReference>
<dbReference type="InterPro" id="IPR012010">
    <property type="entry name" value="Urease_gamma"/>
</dbReference>
<dbReference type="InterPro" id="IPR002026">
    <property type="entry name" value="Urease_gamma/gamma-beta_su"/>
</dbReference>
<dbReference type="InterPro" id="IPR036463">
    <property type="entry name" value="Urease_gamma_sf"/>
</dbReference>
<dbReference type="InterPro" id="IPR050069">
    <property type="entry name" value="Urease_subunit"/>
</dbReference>
<dbReference type="NCBIfam" id="NF009712">
    <property type="entry name" value="PRK13241.1"/>
    <property type="match status" value="1"/>
</dbReference>
<dbReference type="NCBIfam" id="TIGR00193">
    <property type="entry name" value="urease_gam"/>
    <property type="match status" value="1"/>
</dbReference>
<dbReference type="PANTHER" id="PTHR33569">
    <property type="entry name" value="UREASE"/>
    <property type="match status" value="1"/>
</dbReference>
<dbReference type="PANTHER" id="PTHR33569:SF1">
    <property type="entry name" value="UREASE"/>
    <property type="match status" value="1"/>
</dbReference>
<dbReference type="Pfam" id="PF00547">
    <property type="entry name" value="Urease_gamma"/>
    <property type="match status" value="1"/>
</dbReference>
<dbReference type="PIRSF" id="PIRSF001223">
    <property type="entry name" value="Urease_gamma"/>
    <property type="match status" value="1"/>
</dbReference>
<dbReference type="SUPFAM" id="SSF54111">
    <property type="entry name" value="Urease, gamma-subunit"/>
    <property type="match status" value="1"/>
</dbReference>
<protein>
    <recommendedName>
        <fullName evidence="1">Urease subunit gamma</fullName>
        <ecNumber evidence="1">3.5.1.5</ecNumber>
    </recommendedName>
    <alternativeName>
        <fullName evidence="1">Urea amidohydrolase subunit gamma</fullName>
    </alternativeName>
</protein>
<gene>
    <name evidence="1" type="primary">ureA</name>
</gene>
<keyword id="KW-0963">Cytoplasm</keyword>
<keyword id="KW-0903">Direct protein sequencing</keyword>
<keyword id="KW-0378">Hydrolase</keyword>
<organism>
    <name type="scientific">Bacillus sp. (strain TB-90)</name>
    <dbReference type="NCBI Taxonomy" id="36824"/>
    <lineage>
        <taxon>Bacteria</taxon>
        <taxon>Bacillati</taxon>
        <taxon>Bacillota</taxon>
        <taxon>Bacilli</taxon>
        <taxon>Bacillales</taxon>
        <taxon>Bacillaceae</taxon>
        <taxon>Bacillus</taxon>
    </lineage>
</organism>
<reference key="1">
    <citation type="journal article" date="1994" name="J. Bacteriol.">
        <title>Cloning, sequencing, and expression of thermophilic Bacillus sp. strain TB-90 urease gene complex in Escherichia coli.</title>
        <authorList>
            <person name="Maeda M."/>
            <person name="Hidaka M."/>
            <person name="Nakamura A."/>
            <person name="Masaki H."/>
            <person name="Uozumi T."/>
        </authorList>
    </citation>
    <scope>NUCLEOTIDE SEQUENCE [GENOMIC DNA]</scope>
    <scope>PARTIAL PROTEIN SEQUENCE</scope>
</reference>
<comment type="catalytic activity">
    <reaction evidence="1">
        <text>urea + 2 H2O + H(+) = hydrogencarbonate + 2 NH4(+)</text>
        <dbReference type="Rhea" id="RHEA:20557"/>
        <dbReference type="ChEBI" id="CHEBI:15377"/>
        <dbReference type="ChEBI" id="CHEBI:15378"/>
        <dbReference type="ChEBI" id="CHEBI:16199"/>
        <dbReference type="ChEBI" id="CHEBI:17544"/>
        <dbReference type="ChEBI" id="CHEBI:28938"/>
        <dbReference type="EC" id="3.5.1.5"/>
    </reaction>
</comment>
<comment type="pathway">
    <text evidence="1">Nitrogen metabolism; urea degradation; CO(2) and NH(3) from urea (urease route): step 1/1.</text>
</comment>
<comment type="subunit">
    <text evidence="1">Heterotrimer of UreA (gamma), UreB (beta) and UreC (alpha) subunits. Three heterotrimers associate to form the active enzyme.</text>
</comment>
<comment type="subcellular location">
    <subcellularLocation>
        <location evidence="1">Cytoplasm</location>
    </subcellularLocation>
</comment>
<comment type="similarity">
    <text evidence="1">Belongs to the urease gamma subunit family.</text>
</comment>
<accession>Q07399</accession>